<feature type="chain" id="PRO_1000057607" description="S-ribosylhomocysteine lyase">
    <location>
        <begin position="1"/>
        <end position="171"/>
    </location>
</feature>
<feature type="binding site" evidence="1">
    <location>
        <position position="54"/>
    </location>
    <ligand>
        <name>Fe cation</name>
        <dbReference type="ChEBI" id="CHEBI:24875"/>
    </ligand>
</feature>
<feature type="binding site" evidence="1">
    <location>
        <position position="58"/>
    </location>
    <ligand>
        <name>Fe cation</name>
        <dbReference type="ChEBI" id="CHEBI:24875"/>
    </ligand>
</feature>
<feature type="binding site" evidence="1">
    <location>
        <position position="128"/>
    </location>
    <ligand>
        <name>Fe cation</name>
        <dbReference type="ChEBI" id="CHEBI:24875"/>
    </ligand>
</feature>
<proteinExistence type="inferred from homology"/>
<reference key="1">
    <citation type="journal article" date="2010" name="PLoS Genet.">
        <title>Genome sequence of the plant growth promoting endophytic bacterium Enterobacter sp. 638.</title>
        <authorList>
            <person name="Taghavi S."/>
            <person name="van der Lelie D."/>
            <person name="Hoffman A."/>
            <person name="Zhang Y.B."/>
            <person name="Walla M.D."/>
            <person name="Vangronsveld J."/>
            <person name="Newman L."/>
            <person name="Monchy S."/>
        </authorList>
    </citation>
    <scope>NUCLEOTIDE SEQUENCE [LARGE SCALE GENOMIC DNA]</scope>
    <source>
        <strain>638</strain>
    </source>
</reference>
<sequence length="171" mass="19324">MPLLDSFTVDHTRMEAPAVRVAKTMHTPSGDAITVFDLRFCVPNKEVMPEKGIHTLEHLFAGFMRDHLNGNGVEIIDISPMGCRTGFYMSLIGTPEETRVADAWKAAMADVLKVKEQNQIPELNVYQCGTYHMHSLEEAQEIARHILDRDVRVNSNEELALPKETLKELHI</sequence>
<keyword id="KW-0071">Autoinducer synthesis</keyword>
<keyword id="KW-0408">Iron</keyword>
<keyword id="KW-0456">Lyase</keyword>
<keyword id="KW-0479">Metal-binding</keyword>
<keyword id="KW-0673">Quorum sensing</keyword>
<evidence type="ECO:0000255" key="1">
    <source>
        <dbReference type="HAMAP-Rule" id="MF_00091"/>
    </source>
</evidence>
<accession>A4WDQ1</accession>
<protein>
    <recommendedName>
        <fullName evidence="1">S-ribosylhomocysteine lyase</fullName>
        <ecNumber evidence="1">4.4.1.21</ecNumber>
    </recommendedName>
    <alternativeName>
        <fullName evidence="1">AI-2 synthesis protein</fullName>
    </alternativeName>
    <alternativeName>
        <fullName evidence="1">Autoinducer-2 production protein LuxS</fullName>
    </alternativeName>
</protein>
<name>LUXS_ENT38</name>
<dbReference type="EC" id="4.4.1.21" evidence="1"/>
<dbReference type="EMBL" id="CP000653">
    <property type="protein sequence ID" value="ABP61831.1"/>
    <property type="molecule type" value="Genomic_DNA"/>
</dbReference>
<dbReference type="RefSeq" id="WP_015960161.1">
    <property type="nucleotide sequence ID" value="NC_009436.1"/>
</dbReference>
<dbReference type="SMR" id="A4WDQ1"/>
<dbReference type="STRING" id="399742.Ent638_3167"/>
<dbReference type="GeneID" id="93306120"/>
<dbReference type="KEGG" id="ent:Ent638_3167"/>
<dbReference type="eggNOG" id="COG1854">
    <property type="taxonomic scope" value="Bacteria"/>
</dbReference>
<dbReference type="HOGENOM" id="CLU_107531_2_0_6"/>
<dbReference type="OrthoDB" id="9788129at2"/>
<dbReference type="Proteomes" id="UP000000230">
    <property type="component" value="Chromosome"/>
</dbReference>
<dbReference type="GO" id="GO:0005506">
    <property type="term" value="F:iron ion binding"/>
    <property type="evidence" value="ECO:0007669"/>
    <property type="project" value="InterPro"/>
</dbReference>
<dbReference type="GO" id="GO:0043768">
    <property type="term" value="F:S-ribosylhomocysteine lyase activity"/>
    <property type="evidence" value="ECO:0007669"/>
    <property type="project" value="UniProtKB-UniRule"/>
</dbReference>
<dbReference type="GO" id="GO:0009372">
    <property type="term" value="P:quorum sensing"/>
    <property type="evidence" value="ECO:0007669"/>
    <property type="project" value="UniProtKB-UniRule"/>
</dbReference>
<dbReference type="FunFam" id="3.30.1360.80:FF:000001">
    <property type="entry name" value="S-ribosylhomocysteine lyase"/>
    <property type="match status" value="1"/>
</dbReference>
<dbReference type="Gene3D" id="3.30.1360.80">
    <property type="entry name" value="S-ribosylhomocysteinase (LuxS)"/>
    <property type="match status" value="1"/>
</dbReference>
<dbReference type="HAMAP" id="MF_00091">
    <property type="entry name" value="LuxS"/>
    <property type="match status" value="1"/>
</dbReference>
<dbReference type="InterPro" id="IPR037005">
    <property type="entry name" value="LuxS_sf"/>
</dbReference>
<dbReference type="InterPro" id="IPR011249">
    <property type="entry name" value="Metalloenz_LuxS/M16"/>
</dbReference>
<dbReference type="InterPro" id="IPR003815">
    <property type="entry name" value="S-ribosylhomocysteinase"/>
</dbReference>
<dbReference type="NCBIfam" id="NF002602">
    <property type="entry name" value="PRK02260.1-2"/>
    <property type="match status" value="1"/>
</dbReference>
<dbReference type="PANTHER" id="PTHR35799">
    <property type="entry name" value="S-RIBOSYLHOMOCYSTEINE LYASE"/>
    <property type="match status" value="1"/>
</dbReference>
<dbReference type="PANTHER" id="PTHR35799:SF1">
    <property type="entry name" value="S-RIBOSYLHOMOCYSTEINE LYASE"/>
    <property type="match status" value="1"/>
</dbReference>
<dbReference type="Pfam" id="PF02664">
    <property type="entry name" value="LuxS"/>
    <property type="match status" value="1"/>
</dbReference>
<dbReference type="PIRSF" id="PIRSF006160">
    <property type="entry name" value="AI2"/>
    <property type="match status" value="1"/>
</dbReference>
<dbReference type="PRINTS" id="PR01487">
    <property type="entry name" value="LUXSPROTEIN"/>
</dbReference>
<dbReference type="SUPFAM" id="SSF63411">
    <property type="entry name" value="LuxS/MPP-like metallohydrolase"/>
    <property type="match status" value="1"/>
</dbReference>
<comment type="function">
    <text evidence="1">Involved in the synthesis of autoinducer 2 (AI-2) which is secreted by bacteria and is used to communicate both the cell density and the metabolic potential of the environment. The regulation of gene expression in response to changes in cell density is called quorum sensing. Catalyzes the transformation of S-ribosylhomocysteine (RHC) to homocysteine (HC) and 4,5-dihydroxy-2,3-pentadione (DPD).</text>
</comment>
<comment type="catalytic activity">
    <reaction evidence="1">
        <text>S-(5-deoxy-D-ribos-5-yl)-L-homocysteine = (S)-4,5-dihydroxypentane-2,3-dione + L-homocysteine</text>
        <dbReference type="Rhea" id="RHEA:17753"/>
        <dbReference type="ChEBI" id="CHEBI:29484"/>
        <dbReference type="ChEBI" id="CHEBI:58195"/>
        <dbReference type="ChEBI" id="CHEBI:58199"/>
        <dbReference type="EC" id="4.4.1.21"/>
    </reaction>
</comment>
<comment type="cofactor">
    <cofactor evidence="1">
        <name>Fe cation</name>
        <dbReference type="ChEBI" id="CHEBI:24875"/>
    </cofactor>
    <text evidence="1">Binds 1 Fe cation per subunit.</text>
</comment>
<comment type="subunit">
    <text evidence="1">Homodimer.</text>
</comment>
<comment type="similarity">
    <text evidence="1">Belongs to the LuxS family.</text>
</comment>
<gene>
    <name evidence="1" type="primary">luxS</name>
    <name type="ordered locus">Ent638_3167</name>
</gene>
<organism>
    <name type="scientific">Enterobacter sp. (strain 638)</name>
    <dbReference type="NCBI Taxonomy" id="399742"/>
    <lineage>
        <taxon>Bacteria</taxon>
        <taxon>Pseudomonadati</taxon>
        <taxon>Pseudomonadota</taxon>
        <taxon>Gammaproteobacteria</taxon>
        <taxon>Enterobacterales</taxon>
        <taxon>Enterobacteriaceae</taxon>
        <taxon>Enterobacter</taxon>
    </lineage>
</organism>